<organism>
    <name type="scientific">Salmonella choleraesuis (strain SC-B67)</name>
    <dbReference type="NCBI Taxonomy" id="321314"/>
    <lineage>
        <taxon>Bacteria</taxon>
        <taxon>Pseudomonadati</taxon>
        <taxon>Pseudomonadota</taxon>
        <taxon>Gammaproteobacteria</taxon>
        <taxon>Enterobacterales</taxon>
        <taxon>Enterobacteriaceae</taxon>
        <taxon>Salmonella</taxon>
    </lineage>
</organism>
<reference key="1">
    <citation type="journal article" date="2005" name="Nucleic Acids Res.">
        <title>The genome sequence of Salmonella enterica serovar Choleraesuis, a highly invasive and resistant zoonotic pathogen.</title>
        <authorList>
            <person name="Chiu C.-H."/>
            <person name="Tang P."/>
            <person name="Chu C."/>
            <person name="Hu S."/>
            <person name="Bao Q."/>
            <person name="Yu J."/>
            <person name="Chou Y.-Y."/>
            <person name="Wang H.-S."/>
            <person name="Lee Y.-S."/>
        </authorList>
    </citation>
    <scope>NUCLEOTIDE SEQUENCE [LARGE SCALE GENOMIC DNA]</scope>
    <source>
        <strain>SC-B67</strain>
    </source>
</reference>
<comment type="function">
    <text evidence="1">Phosphoribosylformylglycinamidine synthase involved in the purines biosynthetic pathway. Catalyzes the ATP-dependent conversion of formylglycinamide ribonucleotide (FGAR) and glutamine to yield formylglycinamidine ribonucleotide (FGAM) and glutamate.</text>
</comment>
<comment type="catalytic activity">
    <reaction evidence="1">
        <text>N(2)-formyl-N(1)-(5-phospho-beta-D-ribosyl)glycinamide + L-glutamine + ATP + H2O = 2-formamido-N(1)-(5-O-phospho-beta-D-ribosyl)acetamidine + L-glutamate + ADP + phosphate + H(+)</text>
        <dbReference type="Rhea" id="RHEA:17129"/>
        <dbReference type="ChEBI" id="CHEBI:15377"/>
        <dbReference type="ChEBI" id="CHEBI:15378"/>
        <dbReference type="ChEBI" id="CHEBI:29985"/>
        <dbReference type="ChEBI" id="CHEBI:30616"/>
        <dbReference type="ChEBI" id="CHEBI:43474"/>
        <dbReference type="ChEBI" id="CHEBI:58359"/>
        <dbReference type="ChEBI" id="CHEBI:147286"/>
        <dbReference type="ChEBI" id="CHEBI:147287"/>
        <dbReference type="ChEBI" id="CHEBI:456216"/>
        <dbReference type="EC" id="6.3.5.3"/>
    </reaction>
</comment>
<comment type="pathway">
    <text evidence="1">Purine metabolism; IMP biosynthesis via de novo pathway; 5-amino-1-(5-phospho-D-ribosyl)imidazole from N(2)-formyl-N(1)-(5-phospho-D-ribosyl)glycinamide: step 1/2.</text>
</comment>
<comment type="subunit">
    <text evidence="1">Monomer.</text>
</comment>
<comment type="subcellular location">
    <subcellularLocation>
        <location evidence="1">Cytoplasm</location>
    </subcellularLocation>
</comment>
<comment type="similarity">
    <text evidence="1">In the N-terminal section; belongs to the FGAMS family.</text>
</comment>
<protein>
    <recommendedName>
        <fullName evidence="1">Phosphoribosylformylglycinamidine synthase</fullName>
        <shortName evidence="1">FGAM synthase</shortName>
        <shortName evidence="1">FGAMS</shortName>
        <ecNumber evidence="1">6.3.5.3</ecNumber>
    </recommendedName>
    <alternativeName>
        <fullName evidence="1">Formylglycinamide ribonucleotide amidotransferase</fullName>
        <shortName evidence="1">FGAR amidotransferase</shortName>
        <shortName evidence="1">FGAR-AT</shortName>
    </alternativeName>
</protein>
<gene>
    <name evidence="1" type="primary">purL</name>
    <name type="ordered locus">SCH_2560</name>
</gene>
<evidence type="ECO:0000255" key="1">
    <source>
        <dbReference type="HAMAP-Rule" id="MF_00419"/>
    </source>
</evidence>
<evidence type="ECO:0000256" key="2">
    <source>
        <dbReference type="SAM" id="MobiDB-lite"/>
    </source>
</evidence>
<dbReference type="EC" id="6.3.5.3" evidence="1"/>
<dbReference type="EMBL" id="AE017220">
    <property type="protein sequence ID" value="AAX66466.1"/>
    <property type="molecule type" value="Genomic_DNA"/>
</dbReference>
<dbReference type="RefSeq" id="WP_000970037.1">
    <property type="nucleotide sequence ID" value="NC_006905.1"/>
</dbReference>
<dbReference type="SMR" id="Q57LE6"/>
<dbReference type="KEGG" id="sec:SCH_2560"/>
<dbReference type="HOGENOM" id="CLU_001031_0_2_6"/>
<dbReference type="UniPathway" id="UPA00074">
    <property type="reaction ID" value="UER00128"/>
</dbReference>
<dbReference type="Proteomes" id="UP000000538">
    <property type="component" value="Chromosome"/>
</dbReference>
<dbReference type="GO" id="GO:0005737">
    <property type="term" value="C:cytoplasm"/>
    <property type="evidence" value="ECO:0007669"/>
    <property type="project" value="UniProtKB-SubCell"/>
</dbReference>
<dbReference type="GO" id="GO:0005524">
    <property type="term" value="F:ATP binding"/>
    <property type="evidence" value="ECO:0007669"/>
    <property type="project" value="UniProtKB-UniRule"/>
</dbReference>
<dbReference type="GO" id="GO:0046872">
    <property type="term" value="F:metal ion binding"/>
    <property type="evidence" value="ECO:0007669"/>
    <property type="project" value="UniProtKB-KW"/>
</dbReference>
<dbReference type="GO" id="GO:0004642">
    <property type="term" value="F:phosphoribosylformylglycinamidine synthase activity"/>
    <property type="evidence" value="ECO:0007669"/>
    <property type="project" value="UniProtKB-UniRule"/>
</dbReference>
<dbReference type="GO" id="GO:0006189">
    <property type="term" value="P:'de novo' IMP biosynthetic process"/>
    <property type="evidence" value="ECO:0007669"/>
    <property type="project" value="UniProtKB-UniRule"/>
</dbReference>
<dbReference type="CDD" id="cd01740">
    <property type="entry name" value="GATase1_FGAR_AT"/>
    <property type="match status" value="1"/>
</dbReference>
<dbReference type="CDD" id="cd02193">
    <property type="entry name" value="PurL"/>
    <property type="match status" value="1"/>
</dbReference>
<dbReference type="CDD" id="cd02203">
    <property type="entry name" value="PurL_repeat1"/>
    <property type="match status" value="1"/>
</dbReference>
<dbReference type="FunFam" id="1.10.8.750:FF:000002">
    <property type="entry name" value="Phosphoribosylformylglycinamidine synthase"/>
    <property type="match status" value="1"/>
</dbReference>
<dbReference type="FunFam" id="3.30.1330.10:FF:000002">
    <property type="entry name" value="Phosphoribosylformylglycinamidine synthase"/>
    <property type="match status" value="1"/>
</dbReference>
<dbReference type="FunFam" id="3.30.1330.10:FF:000005">
    <property type="entry name" value="Phosphoribosylformylglycinamidine synthase"/>
    <property type="match status" value="1"/>
</dbReference>
<dbReference type="FunFam" id="3.40.50.880:FF:000008">
    <property type="entry name" value="Phosphoribosylformylglycinamidine synthase"/>
    <property type="match status" value="1"/>
</dbReference>
<dbReference type="FunFam" id="3.90.650.10:FF:000002">
    <property type="entry name" value="Phosphoribosylformylglycinamidine synthase"/>
    <property type="match status" value="1"/>
</dbReference>
<dbReference type="FunFam" id="3.90.650.10:FF:000005">
    <property type="entry name" value="Phosphoribosylformylglycinamidine synthase"/>
    <property type="match status" value="1"/>
</dbReference>
<dbReference type="Gene3D" id="3.40.50.880">
    <property type="match status" value="1"/>
</dbReference>
<dbReference type="Gene3D" id="1.10.8.750">
    <property type="entry name" value="Phosphoribosylformylglycinamidine synthase, linker domain"/>
    <property type="match status" value="1"/>
</dbReference>
<dbReference type="Gene3D" id="3.90.650.10">
    <property type="entry name" value="PurM-like C-terminal domain"/>
    <property type="match status" value="2"/>
</dbReference>
<dbReference type="Gene3D" id="3.30.1330.10">
    <property type="entry name" value="PurM-like, N-terminal domain"/>
    <property type="match status" value="2"/>
</dbReference>
<dbReference type="HAMAP" id="MF_00419">
    <property type="entry name" value="PurL_1"/>
    <property type="match status" value="1"/>
</dbReference>
<dbReference type="InterPro" id="IPR029062">
    <property type="entry name" value="Class_I_gatase-like"/>
</dbReference>
<dbReference type="InterPro" id="IPR040707">
    <property type="entry name" value="FGAR-AT_N"/>
</dbReference>
<dbReference type="InterPro" id="IPR055181">
    <property type="entry name" value="FGAR-AT_PurM_N-like"/>
</dbReference>
<dbReference type="InterPro" id="IPR010073">
    <property type="entry name" value="PurL_large"/>
</dbReference>
<dbReference type="InterPro" id="IPR041609">
    <property type="entry name" value="PurL_linker"/>
</dbReference>
<dbReference type="InterPro" id="IPR010918">
    <property type="entry name" value="PurM-like_C_dom"/>
</dbReference>
<dbReference type="InterPro" id="IPR036676">
    <property type="entry name" value="PurM-like_C_sf"/>
</dbReference>
<dbReference type="InterPro" id="IPR036921">
    <property type="entry name" value="PurM-like_N_sf"/>
</dbReference>
<dbReference type="InterPro" id="IPR036604">
    <property type="entry name" value="PurS-like_sf"/>
</dbReference>
<dbReference type="NCBIfam" id="TIGR01735">
    <property type="entry name" value="FGAM_synt"/>
    <property type="match status" value="1"/>
</dbReference>
<dbReference type="NCBIfam" id="NF003672">
    <property type="entry name" value="PRK05297.1"/>
    <property type="match status" value="1"/>
</dbReference>
<dbReference type="PANTHER" id="PTHR10099">
    <property type="entry name" value="PHOSPHORIBOSYLFORMYLGLYCINAMIDINE SYNTHASE"/>
    <property type="match status" value="1"/>
</dbReference>
<dbReference type="PANTHER" id="PTHR10099:SF1">
    <property type="entry name" value="PHOSPHORIBOSYLFORMYLGLYCINAMIDINE SYNTHASE"/>
    <property type="match status" value="1"/>
</dbReference>
<dbReference type="Pfam" id="PF02769">
    <property type="entry name" value="AIRS_C"/>
    <property type="match status" value="2"/>
</dbReference>
<dbReference type="Pfam" id="PF18072">
    <property type="entry name" value="FGAR-AT_linker"/>
    <property type="match status" value="1"/>
</dbReference>
<dbReference type="Pfam" id="PF18076">
    <property type="entry name" value="FGAR-AT_N"/>
    <property type="match status" value="1"/>
</dbReference>
<dbReference type="Pfam" id="PF22689">
    <property type="entry name" value="FGAR-AT_PurM_N-like"/>
    <property type="match status" value="1"/>
</dbReference>
<dbReference type="Pfam" id="PF13507">
    <property type="entry name" value="GATase_5"/>
    <property type="match status" value="1"/>
</dbReference>
<dbReference type="SMART" id="SM01211">
    <property type="entry name" value="GATase_5"/>
    <property type="match status" value="1"/>
</dbReference>
<dbReference type="SUPFAM" id="SSF52317">
    <property type="entry name" value="Class I glutamine amidotransferase-like"/>
    <property type="match status" value="1"/>
</dbReference>
<dbReference type="SUPFAM" id="SSF109736">
    <property type="entry name" value="FGAM synthase PurL, linker domain"/>
    <property type="match status" value="1"/>
</dbReference>
<dbReference type="SUPFAM" id="SSF56042">
    <property type="entry name" value="PurM C-terminal domain-like"/>
    <property type="match status" value="2"/>
</dbReference>
<dbReference type="SUPFAM" id="SSF55326">
    <property type="entry name" value="PurM N-terminal domain-like"/>
    <property type="match status" value="2"/>
</dbReference>
<dbReference type="SUPFAM" id="SSF82697">
    <property type="entry name" value="PurS-like"/>
    <property type="match status" value="1"/>
</dbReference>
<dbReference type="PROSITE" id="PS51273">
    <property type="entry name" value="GATASE_TYPE_1"/>
    <property type="match status" value="1"/>
</dbReference>
<proteinExistence type="inferred from homology"/>
<keyword id="KW-0067">ATP-binding</keyword>
<keyword id="KW-0963">Cytoplasm</keyword>
<keyword id="KW-0315">Glutamine amidotransferase</keyword>
<keyword id="KW-0436">Ligase</keyword>
<keyword id="KW-0460">Magnesium</keyword>
<keyword id="KW-0479">Metal-binding</keyword>
<keyword id="KW-0547">Nucleotide-binding</keyword>
<keyword id="KW-0658">Purine biosynthesis</keyword>
<sequence>MMEILRGSPALSAFRINKLLARFQAANLQVHNIYAEYVHFADLNAPLNDSEQAQLTRLLQYGPALSSHTPAGKLLLVTPRPGTISPWSSKATDIAHNCGLQQVDRLERGVAYYIEASTLTAEQWRQVAAELHDRMMETVFPSLTDAEKLFIHHQPAPVSSVDLLGEGRQALIDANLRLGLALAEDEIDYLQEAFTKLGRNPNDIELYMFAQANSEHCRHKIFNADWIIDGKPQPKSLFKMIKNTFETTPDYVLSAYKDNAAVMEGSAVGRYFADHNTGRYDFHQEPAHILMKVETHNHPTAISPWPGAATGSGGEIRDEGATGRGAKPKAGLVGFSVSNLRIPGFEQPWEEDFGKPERIVTALDIMTEGPLGGAAFNNEFGRPALTGYFRTYEEKVNSHNGEELRGYHKPIMLAGGIGNIRADHVQKGEIVVGAKLIVLGGPAMNIGLGGGAASSMASGQSDADLDFASVQRDNPEMERRCQEVIDRCWQLGDANPILFIHDVGAGGLSNAMPELVSDGGRGGKFELRDILSDEPGMSPLEIWCNESQERYVLAVAADQLPLFDELCKRERAPYAVIGDATEEQHLSLHDNHFDNQPIDLPLDVLLGKTPKMTRDVQTLKAKGDALNRADITIADAVNRVLHLPTVAEKTFLVTIGDRTVTGMVARDQMVGPWQVPVADCAVTTASLDSYYGEAMSIGERAPVALLDFAASARLAVGEALTNIAATQIGDIKRIKLSANWMAAAGHPGEDAGLYDAVKAVGEELCPQLGLTIPVGKDSMSMKTRWQEGNEQREMTSPLSLVISAFARVEDVRHTLTPQLSTEDNALLLIDLGKGHNALGATALAQVYRQLGDKPADVRDVAQLKGFYDAMQALVAARKLLAWHDRSDGGLLVTLAEMAFAGHCGVQVDIAALGDDHLAALFNEELGGVIQVRAEDRDAVEALLAQYGLADCVHYLGQALAGDRFVITANDQTVFSESRTTLRVWWAETTWQMQRLRDNPQCADQEHEAKANDADPGLNVKLSFDINEDIAAPYIATGARPKVAVLREQGGNSHVEMAAAFHRAGFDAIDVHMSDLLGGRIGLGNFHALVACGGFSYGDVLGAGEGWAKSILFNPRVRDEFETFFHRPQTLALGVCNGCQMMSNLRELIPGSELWPRFVRNHSDRFEARFSLVEVTQSPSLLLQGMVGSQMPIAVSHGEGRVEVRDDAHLAALESKGLVALRYVDNFGKVTETYPANPNGSPNGITAVTTENGRVTIMMPHPERVFRTVANSWHPENWGEDSPWMRIFRNARKQLG</sequence>
<accession>Q57LE6</accession>
<feature type="chain" id="PRO_0000264591" description="Phosphoribosylformylglycinamidine synthase">
    <location>
        <begin position="1"/>
        <end position="1295"/>
    </location>
</feature>
<feature type="domain" description="Glutamine amidotransferase type-1" evidence="1">
    <location>
        <begin position="1041"/>
        <end position="1295"/>
    </location>
</feature>
<feature type="region of interest" description="Disordered" evidence="2">
    <location>
        <begin position="305"/>
        <end position="327"/>
    </location>
</feature>
<feature type="active site" description="Nucleophile" evidence="1">
    <location>
        <position position="1135"/>
    </location>
</feature>
<feature type="active site" evidence="1">
    <location>
        <position position="1260"/>
    </location>
</feature>
<feature type="active site" evidence="1">
    <location>
        <position position="1262"/>
    </location>
</feature>
<feature type="binding site" evidence="1">
    <location>
        <begin position="307"/>
        <end position="318"/>
    </location>
    <ligand>
        <name>ATP</name>
        <dbReference type="ChEBI" id="CHEBI:30616"/>
    </ligand>
</feature>
<feature type="binding site" evidence="1">
    <location>
        <begin position="386"/>
        <end position="388"/>
    </location>
    <ligand>
        <name>ATP</name>
        <dbReference type="ChEBI" id="CHEBI:30616"/>
    </ligand>
</feature>
<feature type="binding site" evidence="1">
    <location>
        <position position="678"/>
    </location>
    <ligand>
        <name>ATP</name>
        <dbReference type="ChEBI" id="CHEBI:30616"/>
    </ligand>
</feature>
<feature type="binding site" evidence="1">
    <location>
        <position position="679"/>
    </location>
    <ligand>
        <name>Mg(2+)</name>
        <dbReference type="ChEBI" id="CHEBI:18420"/>
    </ligand>
</feature>
<feature type="binding site" evidence="1">
    <location>
        <position position="718"/>
    </location>
    <ligand>
        <name>Mg(2+)</name>
        <dbReference type="ChEBI" id="CHEBI:18420"/>
    </ligand>
</feature>
<feature type="binding site" evidence="1">
    <location>
        <position position="722"/>
    </location>
    <ligand>
        <name>Mg(2+)</name>
        <dbReference type="ChEBI" id="CHEBI:18420"/>
    </ligand>
</feature>
<feature type="binding site" evidence="1">
    <location>
        <position position="884"/>
    </location>
    <ligand>
        <name>Mg(2+)</name>
        <dbReference type="ChEBI" id="CHEBI:18420"/>
    </ligand>
</feature>
<feature type="binding site" evidence="1">
    <location>
        <position position="886"/>
    </location>
    <ligand>
        <name>ATP</name>
        <dbReference type="ChEBI" id="CHEBI:30616"/>
    </ligand>
</feature>
<name>PUR4_SALCH</name>